<feature type="chain" id="PRO_0000227470" description="UvrABC system protein C">
    <location>
        <begin position="1"/>
        <end position="626"/>
    </location>
</feature>
<feature type="domain" description="GIY-YIG" evidence="1">
    <location>
        <begin position="20"/>
        <end position="97"/>
    </location>
</feature>
<feature type="domain" description="UVR" evidence="1">
    <location>
        <begin position="207"/>
        <end position="242"/>
    </location>
</feature>
<gene>
    <name evidence="1" type="primary">uvrC</name>
    <name type="ordered locus">RT0560</name>
</gene>
<comment type="function">
    <text evidence="1">The UvrABC repair system catalyzes the recognition and processing of DNA lesions. UvrC both incises the 5' and 3' sides of the lesion. The N-terminal half is responsible for the 3' incision and the C-terminal half is responsible for the 5' incision.</text>
</comment>
<comment type="subunit">
    <text evidence="1">Interacts with UvrB in an incision complex.</text>
</comment>
<comment type="subcellular location">
    <subcellularLocation>
        <location evidence="1">Cytoplasm</location>
    </subcellularLocation>
</comment>
<comment type="similarity">
    <text evidence="1">Belongs to the UvrC family.</text>
</comment>
<dbReference type="EMBL" id="AE017197">
    <property type="protein sequence ID" value="AAU04028.1"/>
    <property type="molecule type" value="Genomic_DNA"/>
</dbReference>
<dbReference type="RefSeq" id="WP_011191009.1">
    <property type="nucleotide sequence ID" value="NC_006142.1"/>
</dbReference>
<dbReference type="SMR" id="Q68WG4"/>
<dbReference type="KEGG" id="rty:RT0560"/>
<dbReference type="eggNOG" id="COG0322">
    <property type="taxonomic scope" value="Bacteria"/>
</dbReference>
<dbReference type="HOGENOM" id="CLU_014841_3_2_5"/>
<dbReference type="OrthoDB" id="9804933at2"/>
<dbReference type="Proteomes" id="UP000000604">
    <property type="component" value="Chromosome"/>
</dbReference>
<dbReference type="GO" id="GO:0005737">
    <property type="term" value="C:cytoplasm"/>
    <property type="evidence" value="ECO:0007669"/>
    <property type="project" value="UniProtKB-SubCell"/>
</dbReference>
<dbReference type="GO" id="GO:0009380">
    <property type="term" value="C:excinuclease repair complex"/>
    <property type="evidence" value="ECO:0007669"/>
    <property type="project" value="InterPro"/>
</dbReference>
<dbReference type="GO" id="GO:0003677">
    <property type="term" value="F:DNA binding"/>
    <property type="evidence" value="ECO:0007669"/>
    <property type="project" value="UniProtKB-UniRule"/>
</dbReference>
<dbReference type="GO" id="GO:0009381">
    <property type="term" value="F:excinuclease ABC activity"/>
    <property type="evidence" value="ECO:0007669"/>
    <property type="project" value="UniProtKB-UniRule"/>
</dbReference>
<dbReference type="GO" id="GO:0006289">
    <property type="term" value="P:nucleotide-excision repair"/>
    <property type="evidence" value="ECO:0007669"/>
    <property type="project" value="UniProtKB-UniRule"/>
</dbReference>
<dbReference type="GO" id="GO:0009432">
    <property type="term" value="P:SOS response"/>
    <property type="evidence" value="ECO:0007669"/>
    <property type="project" value="UniProtKB-UniRule"/>
</dbReference>
<dbReference type="CDD" id="cd10434">
    <property type="entry name" value="GIY-YIG_UvrC_Cho"/>
    <property type="match status" value="1"/>
</dbReference>
<dbReference type="FunFam" id="3.40.1440.10:FF:000001">
    <property type="entry name" value="UvrABC system protein C"/>
    <property type="match status" value="1"/>
</dbReference>
<dbReference type="Gene3D" id="1.10.150.20">
    <property type="entry name" value="5' to 3' exonuclease, C-terminal subdomain"/>
    <property type="match status" value="1"/>
</dbReference>
<dbReference type="Gene3D" id="3.40.1440.10">
    <property type="entry name" value="GIY-YIG endonuclease"/>
    <property type="match status" value="1"/>
</dbReference>
<dbReference type="Gene3D" id="4.10.860.10">
    <property type="entry name" value="UVR domain"/>
    <property type="match status" value="1"/>
</dbReference>
<dbReference type="Gene3D" id="3.30.420.340">
    <property type="entry name" value="UvrC, RNAse H endonuclease domain"/>
    <property type="match status" value="1"/>
</dbReference>
<dbReference type="HAMAP" id="MF_00203">
    <property type="entry name" value="UvrC"/>
    <property type="match status" value="1"/>
</dbReference>
<dbReference type="InterPro" id="IPR000305">
    <property type="entry name" value="GIY-YIG_endonuc"/>
</dbReference>
<dbReference type="InterPro" id="IPR035901">
    <property type="entry name" value="GIY-YIG_endonuc_sf"/>
</dbReference>
<dbReference type="InterPro" id="IPR047296">
    <property type="entry name" value="GIY-YIG_UvrC_Cho"/>
</dbReference>
<dbReference type="InterPro" id="IPR003583">
    <property type="entry name" value="Hlx-hairpin-Hlx_DNA-bd_motif"/>
</dbReference>
<dbReference type="InterPro" id="IPR010994">
    <property type="entry name" value="RuvA_2-like"/>
</dbReference>
<dbReference type="InterPro" id="IPR001943">
    <property type="entry name" value="UVR_dom"/>
</dbReference>
<dbReference type="InterPro" id="IPR036876">
    <property type="entry name" value="UVR_dom_sf"/>
</dbReference>
<dbReference type="InterPro" id="IPR050066">
    <property type="entry name" value="UvrABC_protein_C"/>
</dbReference>
<dbReference type="InterPro" id="IPR004791">
    <property type="entry name" value="UvrC"/>
</dbReference>
<dbReference type="InterPro" id="IPR001162">
    <property type="entry name" value="UvrC_RNase_H_dom"/>
</dbReference>
<dbReference type="InterPro" id="IPR038476">
    <property type="entry name" value="UvrC_RNase_H_dom_sf"/>
</dbReference>
<dbReference type="NCBIfam" id="TIGR00194">
    <property type="entry name" value="uvrC"/>
    <property type="match status" value="1"/>
</dbReference>
<dbReference type="PANTHER" id="PTHR30562:SF1">
    <property type="entry name" value="UVRABC SYSTEM PROTEIN C"/>
    <property type="match status" value="1"/>
</dbReference>
<dbReference type="PANTHER" id="PTHR30562">
    <property type="entry name" value="UVRC/OXIDOREDUCTASE"/>
    <property type="match status" value="1"/>
</dbReference>
<dbReference type="Pfam" id="PF01541">
    <property type="entry name" value="GIY-YIG"/>
    <property type="match status" value="1"/>
</dbReference>
<dbReference type="Pfam" id="PF14520">
    <property type="entry name" value="HHH_5"/>
    <property type="match status" value="1"/>
</dbReference>
<dbReference type="Pfam" id="PF02151">
    <property type="entry name" value="UVR"/>
    <property type="match status" value="1"/>
</dbReference>
<dbReference type="Pfam" id="PF22920">
    <property type="entry name" value="UvrC_RNaseH"/>
    <property type="match status" value="1"/>
</dbReference>
<dbReference type="Pfam" id="PF08459">
    <property type="entry name" value="UvrC_RNaseH_dom"/>
    <property type="match status" value="1"/>
</dbReference>
<dbReference type="SMART" id="SM00465">
    <property type="entry name" value="GIYc"/>
    <property type="match status" value="1"/>
</dbReference>
<dbReference type="SMART" id="SM00278">
    <property type="entry name" value="HhH1"/>
    <property type="match status" value="2"/>
</dbReference>
<dbReference type="SUPFAM" id="SSF46600">
    <property type="entry name" value="C-terminal UvrC-binding domain of UvrB"/>
    <property type="match status" value="1"/>
</dbReference>
<dbReference type="SUPFAM" id="SSF82771">
    <property type="entry name" value="GIY-YIG endonuclease"/>
    <property type="match status" value="1"/>
</dbReference>
<dbReference type="SUPFAM" id="SSF47781">
    <property type="entry name" value="RuvA domain 2-like"/>
    <property type="match status" value="1"/>
</dbReference>
<dbReference type="PROSITE" id="PS50164">
    <property type="entry name" value="GIY_YIG"/>
    <property type="match status" value="1"/>
</dbReference>
<dbReference type="PROSITE" id="PS50151">
    <property type="entry name" value="UVR"/>
    <property type="match status" value="1"/>
</dbReference>
<dbReference type="PROSITE" id="PS50165">
    <property type="entry name" value="UVRC"/>
    <property type="match status" value="1"/>
</dbReference>
<sequence length="626" mass="72043">MSLEISGRELIKSKIIDAPECSGVYKMLDVSKQVIYVGKAKILKKRLTNYIKSDLDNKTLRMIANTYFLEYIITHSEVEALLLEAQLIKKFQPKFNILLKDDKSFPFIKLSLDHDFPQLLKYRGKALSDGKLFGPFASNTQVNTTLTELQKIFKLRSCTDNYFNSRTRPCLQYEIKRCYAPCVGKINKENYRVLVIQVKDFLQCRTRELQENLSKKMQELSSQMRFEEAAEIRDRIKALSYVQLKSRILDVVKNADIISIVHKDLHYCIEVALYRAGQPYGNIPYFFSSTENSTHEEVLEYFLLQFYQKQQVPSEIIMNHEINSKENVIEAIKKINNISDLSIIVPHKGDKAKLVHKAEVNALFSLEQYLKKITKNTEIMFEVKKLFDLPEIPERIEIYDNSHIQGMFAVGVMVVAGKIGFDKKEYRVFSLSSRNFTIGSEIELRDDIKGDDYGMLRQVLTRRFTRLKNEPNKLPSLMIIDGGKGHLTVVKEVMDKFGMNIPFVCMSKGRDRNAGLEQLHMQGKEVFTLDKNLLVMKYLQILRDEAHNFAIKNHRLGRSRAIKISSLDDIDGVGEARKTALLHYFGSYKAVCNATIDELAKVKGISKSLASMIFNVLNRKISLDNS</sequence>
<protein>
    <recommendedName>
        <fullName evidence="1">UvrABC system protein C</fullName>
        <shortName evidence="1">Protein UvrC</shortName>
    </recommendedName>
    <alternativeName>
        <fullName evidence="1">Excinuclease ABC subunit C</fullName>
    </alternativeName>
</protein>
<accession>Q68WG4</accession>
<name>UVRC_RICTY</name>
<organism>
    <name type="scientific">Rickettsia typhi (strain ATCC VR-144 / Wilmington)</name>
    <dbReference type="NCBI Taxonomy" id="257363"/>
    <lineage>
        <taxon>Bacteria</taxon>
        <taxon>Pseudomonadati</taxon>
        <taxon>Pseudomonadota</taxon>
        <taxon>Alphaproteobacteria</taxon>
        <taxon>Rickettsiales</taxon>
        <taxon>Rickettsiaceae</taxon>
        <taxon>Rickettsieae</taxon>
        <taxon>Rickettsia</taxon>
        <taxon>typhus group</taxon>
    </lineage>
</organism>
<reference key="1">
    <citation type="journal article" date="2004" name="J. Bacteriol.">
        <title>Complete genome sequence of Rickettsia typhi and comparison with sequences of other Rickettsiae.</title>
        <authorList>
            <person name="McLeod M.P."/>
            <person name="Qin X."/>
            <person name="Karpathy S.E."/>
            <person name="Gioia J."/>
            <person name="Highlander S.K."/>
            <person name="Fox G.E."/>
            <person name="McNeill T.Z."/>
            <person name="Jiang H."/>
            <person name="Muzny D."/>
            <person name="Jacob L.S."/>
            <person name="Hawes A.C."/>
            <person name="Sodergren E."/>
            <person name="Gill R."/>
            <person name="Hume J."/>
            <person name="Morgan M."/>
            <person name="Fan G."/>
            <person name="Amin A.G."/>
            <person name="Gibbs R.A."/>
            <person name="Hong C."/>
            <person name="Yu X.-J."/>
            <person name="Walker D.H."/>
            <person name="Weinstock G.M."/>
        </authorList>
    </citation>
    <scope>NUCLEOTIDE SEQUENCE [LARGE SCALE GENOMIC DNA]</scope>
    <source>
        <strain>ATCC VR-144 / Wilmington</strain>
    </source>
</reference>
<keyword id="KW-0963">Cytoplasm</keyword>
<keyword id="KW-0227">DNA damage</keyword>
<keyword id="KW-0228">DNA excision</keyword>
<keyword id="KW-0234">DNA repair</keyword>
<keyword id="KW-0267">Excision nuclease</keyword>
<keyword id="KW-0742">SOS response</keyword>
<evidence type="ECO:0000255" key="1">
    <source>
        <dbReference type="HAMAP-Rule" id="MF_00203"/>
    </source>
</evidence>
<proteinExistence type="inferred from homology"/>